<feature type="chain" id="PRO_1000141758" description="DNA-directed RNA polymerase subunit beta'">
    <location>
        <begin position="1"/>
        <end position="1405"/>
    </location>
</feature>
<feature type="binding site" evidence="1">
    <location>
        <position position="65"/>
    </location>
    <ligand>
        <name>Zn(2+)</name>
        <dbReference type="ChEBI" id="CHEBI:29105"/>
        <label>1</label>
    </ligand>
</feature>
<feature type="binding site" evidence="1">
    <location>
        <position position="67"/>
    </location>
    <ligand>
        <name>Zn(2+)</name>
        <dbReference type="ChEBI" id="CHEBI:29105"/>
        <label>1</label>
    </ligand>
</feature>
<feature type="binding site" evidence="1">
    <location>
        <position position="80"/>
    </location>
    <ligand>
        <name>Zn(2+)</name>
        <dbReference type="ChEBI" id="CHEBI:29105"/>
        <label>1</label>
    </ligand>
</feature>
<feature type="binding site" evidence="1">
    <location>
        <position position="83"/>
    </location>
    <ligand>
        <name>Zn(2+)</name>
        <dbReference type="ChEBI" id="CHEBI:29105"/>
        <label>1</label>
    </ligand>
</feature>
<feature type="binding site" evidence="1">
    <location>
        <position position="468"/>
    </location>
    <ligand>
        <name>Mg(2+)</name>
        <dbReference type="ChEBI" id="CHEBI:18420"/>
    </ligand>
</feature>
<feature type="binding site" evidence="1">
    <location>
        <position position="470"/>
    </location>
    <ligand>
        <name>Mg(2+)</name>
        <dbReference type="ChEBI" id="CHEBI:18420"/>
    </ligand>
</feature>
<feature type="binding site" evidence="1">
    <location>
        <position position="472"/>
    </location>
    <ligand>
        <name>Mg(2+)</name>
        <dbReference type="ChEBI" id="CHEBI:18420"/>
    </ligand>
</feature>
<feature type="binding site" evidence="1">
    <location>
        <position position="811"/>
    </location>
    <ligand>
        <name>Zn(2+)</name>
        <dbReference type="ChEBI" id="CHEBI:29105"/>
        <label>2</label>
    </ligand>
</feature>
<feature type="binding site" evidence="1">
    <location>
        <position position="885"/>
    </location>
    <ligand>
        <name>Zn(2+)</name>
        <dbReference type="ChEBI" id="CHEBI:29105"/>
        <label>2</label>
    </ligand>
</feature>
<feature type="binding site" evidence="1">
    <location>
        <position position="892"/>
    </location>
    <ligand>
        <name>Zn(2+)</name>
        <dbReference type="ChEBI" id="CHEBI:29105"/>
        <label>2</label>
    </ligand>
</feature>
<feature type="binding site" evidence="1">
    <location>
        <position position="895"/>
    </location>
    <ligand>
        <name>Zn(2+)</name>
        <dbReference type="ChEBI" id="CHEBI:29105"/>
        <label>2</label>
    </ligand>
</feature>
<reference key="1">
    <citation type="journal article" date="2008" name="Science">
        <title>Genome of an endosymbiont coupling N2 fixation to cellulolysis within RT protist cells in termite gut.</title>
        <authorList>
            <person name="Hongoh Y."/>
            <person name="Sharma V.K."/>
            <person name="Prakash T."/>
            <person name="Noda S."/>
            <person name="Toh H."/>
            <person name="Taylor T.D."/>
            <person name="Kudo T."/>
            <person name="Sakaki Y."/>
            <person name="Toyoda A."/>
            <person name="Hattori M."/>
            <person name="Ohkuma M."/>
        </authorList>
    </citation>
    <scope>NUCLEOTIDE SEQUENCE [LARGE SCALE GENOMIC DNA]</scope>
</reference>
<gene>
    <name evidence="1" type="primary">rpoC</name>
    <name type="ordered locus">CFPG_005</name>
</gene>
<evidence type="ECO:0000255" key="1">
    <source>
        <dbReference type="HAMAP-Rule" id="MF_01322"/>
    </source>
</evidence>
<comment type="function">
    <text evidence="1">DNA-dependent RNA polymerase catalyzes the transcription of DNA into RNA using the four ribonucleoside triphosphates as substrates.</text>
</comment>
<comment type="catalytic activity">
    <reaction evidence="1">
        <text>RNA(n) + a ribonucleoside 5'-triphosphate = RNA(n+1) + diphosphate</text>
        <dbReference type="Rhea" id="RHEA:21248"/>
        <dbReference type="Rhea" id="RHEA-COMP:14527"/>
        <dbReference type="Rhea" id="RHEA-COMP:17342"/>
        <dbReference type="ChEBI" id="CHEBI:33019"/>
        <dbReference type="ChEBI" id="CHEBI:61557"/>
        <dbReference type="ChEBI" id="CHEBI:140395"/>
        <dbReference type="EC" id="2.7.7.6"/>
    </reaction>
</comment>
<comment type="cofactor">
    <cofactor evidence="1">
        <name>Mg(2+)</name>
        <dbReference type="ChEBI" id="CHEBI:18420"/>
    </cofactor>
    <text evidence="1">Binds 1 Mg(2+) ion per subunit.</text>
</comment>
<comment type="cofactor">
    <cofactor evidence="1">
        <name>Zn(2+)</name>
        <dbReference type="ChEBI" id="CHEBI:29105"/>
    </cofactor>
    <text evidence="1">Binds 2 Zn(2+) ions per subunit.</text>
</comment>
<comment type="subunit">
    <text evidence="1">The RNAP catalytic core consists of 2 alpha, 1 beta, 1 beta' and 1 omega subunit. When a sigma factor is associated with the core the holoenzyme is formed, which can initiate transcription.</text>
</comment>
<comment type="similarity">
    <text evidence="1">Belongs to the RNA polymerase beta' chain family.</text>
</comment>
<name>RPOC_AZOPC</name>
<organism>
    <name type="scientific">Azobacteroides pseudotrichonymphae genomovar. CFP2</name>
    <dbReference type="NCBI Taxonomy" id="511995"/>
    <lineage>
        <taxon>Bacteria</taxon>
        <taxon>Pseudomonadati</taxon>
        <taxon>Bacteroidota</taxon>
        <taxon>Bacteroidia</taxon>
        <taxon>Bacteroidales</taxon>
        <taxon>Candidatus Azobacteroides</taxon>
    </lineage>
</organism>
<sequence length="1405" mass="158028">MAFRKENKVKSFTRIFISLASSDNILAQSSGEVLKPETINYRTYRPERDGLFCERIFGPIKDYECHCGKYKRIRYKGVVCDRCGVEVTEKRVRRERMGHIQLVVPVVHIWYFRSLPNKIGYLLGLSSKKLDAIIYYERFVVIQPGITDKKVCDLLSEEEYLEVLDGLPVENQRLDDINPDKFIAKMGGEAIYDLLSRLELDSLSYELRHKIDNDTSQQRKIDALKRLQVIESFRSSKNKNRPEWMVIGVIPVIPPELRPLIPLDGGRFAASDVNDLYRRVIIRNNRLKRLIDIDAPDVILRNEKRMLQEAVDSLFDNSRKSSAVKTDANRPLKSLSDSLKGKQGRFRQNLLGKRVDYSARSVIVVGPELKMHECGLPKGIAAELYKPFIIRKLMDRGVVKTVKSAKKLVDGRDPIIWDILEYVMKGHPVLLNRAPTLHRLSIQAFQPKLIEGKAIQLHPLSCTAFNADFDGDQMAVHLPLGNEAILEAQMLMLASHNILNPANGTPITIPSQDMVLGLFYITKMRRGAKGEGLKFYGTEEAIIAYNEGKVDIHAFVKVYVDDIDENGTPINHIIETSVGRVIVNGFVPKAVGFVNEELSKKSLRSVISDVIKTCGVSRTAQFLDDIKDLGYMMAFKGCLSFNLDNVIVPKEKETFVQEGYKEIEEILANYNMGIITYNERYNQIIDTWTHVNSRLSDALMKQLREDDQGFNPVFMMLESGARGSKEQIRQLSGMRGLMAKPQKSVMGGGQIIENPILSNFKEGLSVLEYFISTHGARKGLADTALKTADAGYLTRRLVDVSHNVIINEEDCGTLRGLIATELRKNEDVVVSLYERILGRVSVCDVQHPESRKIIVYAGEEISEDKALAIQNSSIERVEIRSVLTCESKKGVCVKCYGRNLATGSIVQIGEAVGVIAAQSIGEPGTQLTLRTFHVGGIASNIATESSVVSKYDGILEIDELRTVEVVDEINNRHLIVVSRLAEMRIIDTRTKIVLATYNIPYASKLFFNDRDEIKKGDLLFEWDAFNASIVSEVAGRFHLENVIENITYKNEYDEQTGLKEKVIIESRDKTKIPVIHILDENGEIRRIYNLPLGAHITKEEKDVIRVGEVLVKIPRTVGKTGDITGGLPRVTELFEARNPSNPAVVSEIDGEISFGKVKRGSREVIVTSKNGDYRTYLVSLSKQILVQENDYIRAGMPLSDGIIAPSDILAVNGPTAVQEYIVNEIQDVYRLQGVKINDKHFEVIVRQMMRKVEIIEAGDTKFVARQLVDRDEVSEENDHIWDKKVVVNVGDSSNVKQGQIITMRKLREENSILKRRDLRLIEVRDSIPATVMQILQGITRASLQTSSFISAASFQETAKVLNEAAIKGKVDKLVGMKENVICGRLIPAGTGLKEYDKIMVETTME</sequence>
<protein>
    <recommendedName>
        <fullName evidence="1">DNA-directed RNA polymerase subunit beta'</fullName>
        <shortName evidence="1">RNAP subunit beta'</shortName>
        <ecNumber evidence="1">2.7.7.6</ecNumber>
    </recommendedName>
    <alternativeName>
        <fullName evidence="1">RNA polymerase subunit beta'</fullName>
    </alternativeName>
    <alternativeName>
        <fullName evidence="1">Transcriptase subunit beta'</fullName>
    </alternativeName>
</protein>
<dbReference type="EC" id="2.7.7.6" evidence="1"/>
<dbReference type="EMBL" id="AP010656">
    <property type="protein sequence ID" value="BAG83268.1"/>
    <property type="molecule type" value="Genomic_DNA"/>
</dbReference>
<dbReference type="RefSeq" id="WP_012573029.1">
    <property type="nucleotide sequence ID" value="NC_011565.1"/>
</dbReference>
<dbReference type="SMR" id="B6YPZ6"/>
<dbReference type="STRING" id="511995.CFPG_005"/>
<dbReference type="KEGG" id="aps:CFPG_005"/>
<dbReference type="eggNOG" id="COG0086">
    <property type="taxonomic scope" value="Bacteria"/>
</dbReference>
<dbReference type="HOGENOM" id="CLU_000524_3_1_10"/>
<dbReference type="OrthoDB" id="9815296at2"/>
<dbReference type="Proteomes" id="UP000000723">
    <property type="component" value="Chromosome"/>
</dbReference>
<dbReference type="GO" id="GO:0000428">
    <property type="term" value="C:DNA-directed RNA polymerase complex"/>
    <property type="evidence" value="ECO:0007669"/>
    <property type="project" value="UniProtKB-KW"/>
</dbReference>
<dbReference type="GO" id="GO:0003677">
    <property type="term" value="F:DNA binding"/>
    <property type="evidence" value="ECO:0007669"/>
    <property type="project" value="UniProtKB-UniRule"/>
</dbReference>
<dbReference type="GO" id="GO:0003899">
    <property type="term" value="F:DNA-directed RNA polymerase activity"/>
    <property type="evidence" value="ECO:0007669"/>
    <property type="project" value="UniProtKB-UniRule"/>
</dbReference>
<dbReference type="GO" id="GO:0000287">
    <property type="term" value="F:magnesium ion binding"/>
    <property type="evidence" value="ECO:0007669"/>
    <property type="project" value="UniProtKB-UniRule"/>
</dbReference>
<dbReference type="GO" id="GO:0008270">
    <property type="term" value="F:zinc ion binding"/>
    <property type="evidence" value="ECO:0007669"/>
    <property type="project" value="UniProtKB-UniRule"/>
</dbReference>
<dbReference type="GO" id="GO:0006351">
    <property type="term" value="P:DNA-templated transcription"/>
    <property type="evidence" value="ECO:0007669"/>
    <property type="project" value="UniProtKB-UniRule"/>
</dbReference>
<dbReference type="CDD" id="cd02655">
    <property type="entry name" value="RNAP_beta'_C"/>
    <property type="match status" value="1"/>
</dbReference>
<dbReference type="CDD" id="cd01609">
    <property type="entry name" value="RNAP_beta'_N"/>
    <property type="match status" value="1"/>
</dbReference>
<dbReference type="Gene3D" id="1.10.132.30">
    <property type="match status" value="1"/>
</dbReference>
<dbReference type="Gene3D" id="1.10.150.390">
    <property type="match status" value="1"/>
</dbReference>
<dbReference type="Gene3D" id="1.10.1790.20">
    <property type="match status" value="1"/>
</dbReference>
<dbReference type="Gene3D" id="1.10.40.90">
    <property type="match status" value="1"/>
</dbReference>
<dbReference type="Gene3D" id="2.40.40.20">
    <property type="match status" value="1"/>
</dbReference>
<dbReference type="Gene3D" id="2.40.50.100">
    <property type="match status" value="3"/>
</dbReference>
<dbReference type="Gene3D" id="4.10.860.120">
    <property type="entry name" value="RNA polymerase II, clamp domain"/>
    <property type="match status" value="1"/>
</dbReference>
<dbReference type="Gene3D" id="1.10.274.100">
    <property type="entry name" value="RNA polymerase Rpb1, domain 3"/>
    <property type="match status" value="2"/>
</dbReference>
<dbReference type="HAMAP" id="MF_01322">
    <property type="entry name" value="RNApol_bact_RpoC"/>
    <property type="match status" value="1"/>
</dbReference>
<dbReference type="InterPro" id="IPR045867">
    <property type="entry name" value="DNA-dir_RpoC_beta_prime"/>
</dbReference>
<dbReference type="InterPro" id="IPR012754">
    <property type="entry name" value="DNA-dir_RpoC_beta_prime_bact"/>
</dbReference>
<dbReference type="InterPro" id="IPR000722">
    <property type="entry name" value="RNA_pol_asu"/>
</dbReference>
<dbReference type="InterPro" id="IPR006592">
    <property type="entry name" value="RNA_pol_N"/>
</dbReference>
<dbReference type="InterPro" id="IPR007080">
    <property type="entry name" value="RNA_pol_Rpb1_1"/>
</dbReference>
<dbReference type="InterPro" id="IPR007066">
    <property type="entry name" value="RNA_pol_Rpb1_3"/>
</dbReference>
<dbReference type="InterPro" id="IPR042102">
    <property type="entry name" value="RNA_pol_Rpb1_3_sf"/>
</dbReference>
<dbReference type="InterPro" id="IPR007083">
    <property type="entry name" value="RNA_pol_Rpb1_4"/>
</dbReference>
<dbReference type="InterPro" id="IPR007081">
    <property type="entry name" value="RNA_pol_Rpb1_5"/>
</dbReference>
<dbReference type="InterPro" id="IPR044893">
    <property type="entry name" value="RNA_pol_Rpb1_clamp_domain"/>
</dbReference>
<dbReference type="InterPro" id="IPR038120">
    <property type="entry name" value="Rpb1_funnel_sf"/>
</dbReference>
<dbReference type="NCBIfam" id="TIGR02386">
    <property type="entry name" value="rpoC_TIGR"/>
    <property type="match status" value="1"/>
</dbReference>
<dbReference type="PANTHER" id="PTHR19376">
    <property type="entry name" value="DNA-DIRECTED RNA POLYMERASE"/>
    <property type="match status" value="1"/>
</dbReference>
<dbReference type="PANTHER" id="PTHR19376:SF54">
    <property type="entry name" value="DNA-DIRECTED RNA POLYMERASE SUBUNIT BETA"/>
    <property type="match status" value="1"/>
</dbReference>
<dbReference type="Pfam" id="PF04997">
    <property type="entry name" value="RNA_pol_Rpb1_1"/>
    <property type="match status" value="1"/>
</dbReference>
<dbReference type="Pfam" id="PF00623">
    <property type="entry name" value="RNA_pol_Rpb1_2"/>
    <property type="match status" value="2"/>
</dbReference>
<dbReference type="Pfam" id="PF04983">
    <property type="entry name" value="RNA_pol_Rpb1_3"/>
    <property type="match status" value="1"/>
</dbReference>
<dbReference type="Pfam" id="PF05000">
    <property type="entry name" value="RNA_pol_Rpb1_4"/>
    <property type="match status" value="1"/>
</dbReference>
<dbReference type="Pfam" id="PF04998">
    <property type="entry name" value="RNA_pol_Rpb1_5"/>
    <property type="match status" value="1"/>
</dbReference>
<dbReference type="SMART" id="SM00663">
    <property type="entry name" value="RPOLA_N"/>
    <property type="match status" value="1"/>
</dbReference>
<dbReference type="SUPFAM" id="SSF64484">
    <property type="entry name" value="beta and beta-prime subunits of DNA dependent RNA-polymerase"/>
    <property type="match status" value="1"/>
</dbReference>
<keyword id="KW-0240">DNA-directed RNA polymerase</keyword>
<keyword id="KW-0460">Magnesium</keyword>
<keyword id="KW-0479">Metal-binding</keyword>
<keyword id="KW-0548">Nucleotidyltransferase</keyword>
<keyword id="KW-1185">Reference proteome</keyword>
<keyword id="KW-0804">Transcription</keyword>
<keyword id="KW-0808">Transferase</keyword>
<keyword id="KW-0862">Zinc</keyword>
<accession>B6YPZ6</accession>
<proteinExistence type="inferred from homology"/>